<evidence type="ECO:0000250" key="1">
    <source>
        <dbReference type="UniProtKB" id="Q92633"/>
    </source>
</evidence>
<evidence type="ECO:0000255" key="2"/>
<evidence type="ECO:0000255" key="3">
    <source>
        <dbReference type="PROSITE-ProRule" id="PRU00521"/>
    </source>
</evidence>
<evidence type="ECO:0000269" key="4">
    <source>
    </source>
</evidence>
<evidence type="ECO:0000269" key="5">
    <source>
    </source>
</evidence>
<evidence type="ECO:0000269" key="6">
    <source>
    </source>
</evidence>
<evidence type="ECO:0000269" key="7">
    <source>
    </source>
</evidence>
<evidence type="ECO:0000269" key="8">
    <source>
    </source>
</evidence>
<evidence type="ECO:0000269" key="9">
    <source>
    </source>
</evidence>
<evidence type="ECO:0000269" key="10">
    <source>
    </source>
</evidence>
<evidence type="ECO:0000269" key="11">
    <source>
    </source>
</evidence>
<evidence type="ECO:0000269" key="12">
    <source>
    </source>
</evidence>
<evidence type="ECO:0000269" key="13">
    <source>
    </source>
</evidence>
<evidence type="ECO:0000269" key="14">
    <source>
    </source>
</evidence>
<evidence type="ECO:0000269" key="15">
    <source>
    </source>
</evidence>
<evidence type="ECO:0000269" key="16">
    <source>
    </source>
</evidence>
<evidence type="ECO:0000269" key="17">
    <source>
    </source>
</evidence>
<evidence type="ECO:0000269" key="18">
    <source>
    </source>
</evidence>
<evidence type="ECO:0000269" key="19">
    <source>
    </source>
</evidence>
<evidence type="ECO:0000269" key="20">
    <source>
    </source>
</evidence>
<evidence type="ECO:0000269" key="21">
    <source>
    </source>
</evidence>
<evidence type="ECO:0000269" key="22">
    <source>
    </source>
</evidence>
<evidence type="ECO:0000303" key="23">
    <source>
    </source>
</evidence>
<evidence type="ECO:0000303" key="24">
    <source>
    </source>
</evidence>
<evidence type="ECO:0000303" key="25">
    <source>
    </source>
</evidence>
<evidence type="ECO:0000303" key="26">
    <source>
    </source>
</evidence>
<evidence type="ECO:0000305" key="27"/>
<evidence type="ECO:0000305" key="28">
    <source>
    </source>
</evidence>
<evidence type="ECO:0000305" key="29">
    <source>
    </source>
</evidence>
<evidence type="ECO:0007744" key="30">
    <source>
    </source>
</evidence>
<accession>P61793</accession>
<accession>A2AMJ2</accession>
<accession>O88584</accession>
<accession>P56487</accession>
<accession>P70420</accession>
<accession>Q61130</accession>
<comment type="function">
    <text evidence="1 4 5 6 7 8 9 10 11 12 13 14 16 18 20 22">Receptor for lysophosphatidic acid (LPA) (PubMed:11087877, PubMed:18066075). Plays a role in the reorganization of the actin cytoskeleton, cell migration, differentiation and proliferation, and thereby contributes to the responses to tissue damage and infectious agents. Activates downstream signaling cascades via the G(i)/G(o), G(12)/G(13), and G(q) families of heteromeric G proteins (PubMed:11040035, PubMed:18066075, PubMed:18157949, PubMed:23478264, PubMed:8922387, PubMed:9600933). Signaling inhibits adenylyl cyclase activity and decreases cellular cAMP levels (PubMed:11040035, PubMed:12215548). Signaling triggers an increase of cytoplasmic Ca(2+) levels (PubMed:12215548). Activates RALA; this leads to the activation of phospholipase C (PLC) and the formation of inositol 1,4,5-trisphosphate (PubMed:11040035, PubMed:12215548, PubMed:23478264). Signaling mediates activation of down-stream MAP kinases (PubMed:11040035). Contributes to the regulation of cell shape (PubMed:11040035, PubMed:11087877, PubMed:8922387, PubMed:9600933). Promotes Rho-dependent reorganization of the actin cytoskeleton in neuronal cells and neurite retraction (PubMed:11040035, PubMed:12181339, PubMed:9600933). Promotes the activation of Rho and the formation of actin stress fibers (PubMed:12215548, PubMed:9600933). Promotes formation of lamellipodia at the leading edge of migrating cells via activation of RAC1 (PubMed:23478264). Through its function as LPA receptor, plays a role in chemotaxis and cell migration, including responses to injury and wounding (PubMed:11087877, PubMed:18066075, PubMed:23478264). Plays a role in triggering inflammation in response to bacterial lipopolysaccharide (LPS) via its interaction with CD14 (PubMed:21821728). Promotes cell proliferation in response to LPA (PubMed:11087877, PubMed:12215548, PubMed:17692995, PubMed:18157949, PubMed:23478264, PubMed:9600933). Inhibits the intracellular ciliogenesis pathway in response to LPA and through AKT1 activation (By similarity). Required for normal skeleton development (PubMed:21569876). May play a role in osteoblast differentiation (PubMed:21569876). Required for normal brain development (PubMed:17656621, PubMed:18708146). Required for normal proliferation, survival and maturation of newly formed neurons in the adult dentate gyrus (PubMed:18708146). Plays a role in pain perception and in the initiation of neuropathic pain (PubMed:15195086, PubMed:19689455).</text>
</comment>
<comment type="subunit">
    <text evidence="1 17 18">Interacts with RALA and GRK2 (By similarity). Interacts with GNAQ and GNA13 (PubMed:23478264). Interacts with CD14; the interaction is enhanced by exposure to bacterial lipopolysaccharide (LPS) (PubMed:21821728).</text>
</comment>
<comment type="interaction">
    <interactant intactId="EBI-7512335">
        <id>P61793</id>
    </interactant>
    <interactant intactId="EBI-821440">
        <id>Q9NZN5</id>
        <label>ARHGEF12</label>
    </interactant>
    <organismsDiffer>true</organismsDiffer>
    <experiments>3</experiments>
</comment>
<comment type="subcellular location">
    <subcellularLocation>
        <location evidence="20">Cell surface</location>
    </subcellularLocation>
    <subcellularLocation>
        <location evidence="12 17 22 29">Cell membrane</location>
        <topology evidence="1">Multi-pass membrane protein</topology>
    </subcellularLocation>
    <subcellularLocation>
        <location evidence="1 28">Endosome</location>
    </subcellularLocation>
    <text evidence="1 12">Prior to LPA treatment found predominantly at the cell surface. Internalized after LPA treatment (PubMed:18157949). Colocalizes with RALA in endocytic vesicles after LPA treatment.</text>
</comment>
<comment type="alternative products">
    <event type="alternative splicing"/>
    <isoform>
        <id>P61793-1</id>
        <id>Q61130-1</id>
        <name>1</name>
        <sequence type="displayed"/>
    </isoform>
    <isoform>
        <id>P61793-2</id>
        <id>Q61130-2</id>
        <name>2</name>
        <sequence type="described" ref="VSP_001986"/>
    </isoform>
</comment>
<comment type="tissue specificity">
    <text evidence="7 8 11 16 19 20 21">Detected in lung (PubMed:21821728). Detected in oligodendrocytes in corpus callosum in brain cortex (at protein level) (PubMed:25226845). Expressed within the embryonic cerebral cortex, where it is enriched in the ventricular zone (PubMed:8922387). In the adult brain, also expressed in oligodendrocytes, as well as Schwann cells of the peripheral nervous system (PubMed:25226845, PubMed:9013780). Expressed in many other tissues, including lung, heart, intestine, spleen, thymus, and stomach. No expression in liver (PubMed:9013780). Detected in kidney and testis (PubMed:12215548, PubMed:9013780). Detected in embryonic fibroblasts (PubMed:12215548). Detected in adult lung fibroblasts and lung endothelial cells (PubMed:18066075). Detected in dorsal root ganglion and dorsal root (PubMed:15195086). Detected in astrocytes (PubMed:17692995). Detected in bone (PubMed:21569876).</text>
</comment>
<comment type="induction">
    <text evidence="17">Up-regulated by bacterial lipopolysaccharide (LPS) (at protein level). Up-regulated by bacterial lipopolysaccharide (LPS).</text>
</comment>
<comment type="PTM">
    <text evidence="1">N-glycosylated.</text>
</comment>
<comment type="disruption phenotype">
    <text evidence="5 7 8 9 11 13 14 15 16 17 19">Mutant embryos are detected at the expected Mendelian rate, but there is about 50% perinatal lethality. This is mostly due to suckling defects, possibly because the neonates cannot find a nipple. Surviving mice are smaller, and they have shorter snouts and more widely spaced eyes than wild-type. A small percentage of the embryos and neonates display frontal hematomas. Besides, a small percentage of the embryos display exencephaly (PubMed:11087877). These mice display also deformity of the rib cage with sterno-distal rib fusions, shorter, crooked sternebrae, delayed vertebral calcification and closure of the thoracic spine (PubMed:21569876). Their small size is due to growth defects of limbs and vertebrae (PubMed:21569876). Mutant mice display decreased bone mass, as well as defects in proliferation and osteoblastic differentiation of bone marrow mesenchymal stem cells (PubMed:21569876). A spontaneous variant (the Malaga variant) that appeared among the descendants of the original knockout mice shows almost complete perinatal viability, but the mice still present small size, shorter snouts, wider-spaced eyes and reduced brain volume (PubMed:17656621). Compared to wild-type, the Malaga variants display smaller olfactory bulbs, and generally a smaller brain with slightly decreased thickness of the brain cortex and subtle defects in cortex development (PubMed:17656621). The hippocampus appears normal at birth, but displays a reduced number of cell divisions in adult dentate gyrus, both under normal conditions and when mice are exposed to a stimulating environment that promotes neurogenesis (PubMed:18708146). Compared to wild-type, the newly formed hippocampus cells show reduced survival (PubMed:18708146). Newly formed granule cells display defects in their maturation (PubMed:18708146). Mutant mice present subtle myelination defects in the brain cortex (PubMed:25226845). Mutant mice display minor defects in somesthesis, olfaction, grasping and keeping their equilibrium, and show decreased sensitivity to pain caused by heat (PubMed:19689455). Mutant mice do not display allodynia and hyperalgesia after nerve injury and are protected against demyelination after nerve injury (PubMed:15195086). Mutant mice display increased Schwann cell apoptosis in sciatic nerve, but this still leaves the majority of Schwann cells intact and does not cause any visible effect on movement (PubMed:11087877). Mutant mice display decreased exploration in the open field and increased anxiety-like responses to novelty; they also show subtle deficits in spatial learning and memory (PubMed:19689455). Mutant mice show blunted responses to bacterial lipopolysaccharide (LPS) and show reduced acute inflammation in response to LPS (PubMed:21821728). Mutant mice show decreased migration of fibroblasts to sites of lung injury, decreased injury-induced vascular leak, and are protected against the development of lung fibrosis after bleomycin treatment (PubMed:18066075). Mutant mice have reduced levels of proliferating epithelial cells in their intestinal crypts, and the cells do not migrate normally from the bottom of the crypts up into the villi (PubMed:23478264). Mutant mice show impaired repair after wounding of the intestinal mucosa (PubMed:23478264). Mutant mice have less body weight, but increased brown and white adipose tissue (PubMed:20358347). Contrary to wild-type, mutant mice do not increase their food consumption on a high fat diet and do not gain weight on a high fat diet (PubMed:20358347). Mice deficient in both Lpar1 and Lpar2 have the same phenotype as mice lacking Lpar1, excepting a higher incidence of frontal hematomas and slightly higher perinatal lethality (PubMed:12215548).</text>
</comment>
<comment type="similarity">
    <text evidence="3">Belongs to the G-protein coupled receptor 1 family.</text>
</comment>
<reference key="1">
    <citation type="journal article" date="1996" name="J. Cell Biol.">
        <title>Ventricular zone gene-1 (vzg-1) encodes a lysophosphatidic acid receptor expressed in neurogenic regions of the developing cerebral cortex.</title>
        <authorList>
            <person name="Hecht J.H."/>
            <person name="Weiner J.A."/>
            <person name="Post S.R."/>
            <person name="Chun J."/>
        </authorList>
    </citation>
    <scope>NUCLEOTIDE SEQUENCE [MRNA] (ISOFORM 1)</scope>
    <scope>FUNCTION</scope>
    <scope>SUBCELLULAR LOCATION</scope>
    <scope>TISSUE SPECIFICITY</scope>
    <source>
        <strain>BALB/cJ</strain>
    </source>
</reference>
<reference key="2">
    <citation type="journal article" date="1996" name="Brain Res. Mol. Brain Res.">
        <title>Cloning, characterization, and chromosomal localization of rec1.3, a member of the G-protein-coupled receptor family highly expressed in brain.</title>
        <authorList>
            <person name="Macrae A.D."/>
            <person name="Premont R.T."/>
            <person name="Jaber M."/>
            <person name="Petersen A.S."/>
            <person name="Lefkowitz R.J."/>
        </authorList>
    </citation>
    <scope>NUCLEOTIDE SEQUENCE [MRNA] (ISOFORM 2)</scope>
    <scope>TISSUE SPECIFICITY</scope>
    <source>
        <strain>C57BL/6J</strain>
        <tissue>Brain</tissue>
    </source>
</reference>
<reference key="3">
    <citation type="journal article" date="1998" name="Genomics">
        <title>Complete cDNA sequence, genomic structure, and chromosomal localization of the LPA receptor gene, lpA1/vzg-1/Gpcr26.</title>
        <authorList>
            <person name="Contos J.J.A."/>
            <person name="Chun J."/>
        </authorList>
    </citation>
    <scope>NUCLEOTIDE SEQUENCE [GENOMIC DNA] (ISOFORMS 1 AND 2)</scope>
    <source>
        <strain>129/SvJ</strain>
    </source>
</reference>
<reference key="4">
    <citation type="journal article" date="2009" name="PLoS Biol.">
        <title>Lineage-specific biology revealed by a finished genome assembly of the mouse.</title>
        <authorList>
            <person name="Church D.M."/>
            <person name="Goodstadt L."/>
            <person name="Hillier L.W."/>
            <person name="Zody M.C."/>
            <person name="Goldstein S."/>
            <person name="She X."/>
            <person name="Bult C.J."/>
            <person name="Agarwala R."/>
            <person name="Cherry J.L."/>
            <person name="DiCuccio M."/>
            <person name="Hlavina W."/>
            <person name="Kapustin Y."/>
            <person name="Meric P."/>
            <person name="Maglott D."/>
            <person name="Birtle Z."/>
            <person name="Marques A.C."/>
            <person name="Graves T."/>
            <person name="Zhou S."/>
            <person name="Teague B."/>
            <person name="Potamousis K."/>
            <person name="Churas C."/>
            <person name="Place M."/>
            <person name="Herschleb J."/>
            <person name="Runnheim R."/>
            <person name="Forrest D."/>
            <person name="Amos-Landgraf J."/>
            <person name="Schwartz D.C."/>
            <person name="Cheng Z."/>
            <person name="Lindblad-Toh K."/>
            <person name="Eichler E.E."/>
            <person name="Ponting C.P."/>
        </authorList>
    </citation>
    <scope>NUCLEOTIDE SEQUENCE [LARGE SCALE GENOMIC DNA]</scope>
    <source>
        <strain>C57BL/6J</strain>
    </source>
</reference>
<reference key="5">
    <citation type="journal article" date="2004" name="Genome Res.">
        <title>The status, quality, and expansion of the NIH full-length cDNA project: the Mammalian Gene Collection (MGC).</title>
        <authorList>
            <consortium name="The MGC Project Team"/>
        </authorList>
    </citation>
    <scope>NUCLEOTIDE SEQUENCE [LARGE SCALE MRNA] (ISOFORM 1)</scope>
    <source>
        <strain>FVB/N-3</strain>
    </source>
</reference>
<reference key="6">
    <citation type="journal article" date="1998" name="Proc. Natl. Acad. Sci. U.S.A.">
        <title>A single receptor encoded by vzg-1/lpA1/edg-2 couples to G proteins and mediates multiple cellular responses to lysophosphatidic acid.</title>
        <authorList>
            <person name="Fukushima N."/>
            <person name="Kimura Y."/>
            <person name="Chun J."/>
        </authorList>
    </citation>
    <scope>FUNCTION</scope>
    <scope>SUBCELLULAR LOCATION</scope>
</reference>
<reference key="7">
    <citation type="journal article" date="2000" name="Mol. Pharmacol.">
        <title>Functional comparisons of the lysophosphatidic acid receptors, LP(A1)/VZG-1/EDG-2, LP(A2)/EDG-4, and LP(A3)/EDG-7 in neuronal cell lines using a retrovirus expression system.</title>
        <authorList>
            <person name="Ishii I."/>
            <person name="Contos J.J."/>
            <person name="Fukushima N."/>
            <person name="Chun J."/>
        </authorList>
    </citation>
    <scope>FUNCTION</scope>
</reference>
<reference key="8">
    <citation type="journal article" date="2000" name="Mol. Pharmacol.">
        <title>Lysophosphatidic acid receptors.</title>
        <authorList>
            <person name="Contos J.J.A."/>
            <person name="Ishii I."/>
            <person name="Chun J."/>
        </authorList>
    </citation>
    <scope>REVIEW</scope>
</reference>
<reference key="9">
    <citation type="journal article" date="2000" name="Proc. Natl. Acad. Sci. U.S.A.">
        <title>Requirement for the lpA1 lysophosphatidic acid receptor gene in normal suckling behavior.</title>
        <authorList>
            <person name="Contos J.J."/>
            <person name="Fukushima N."/>
            <person name="Weiner J.A."/>
            <person name="Kaushal D."/>
            <person name="Chun J."/>
        </authorList>
    </citation>
    <scope>DISRUPTION PHENOTYPE</scope>
    <scope>FUNCTION</scope>
</reference>
<reference key="10">
    <citation type="journal article" date="2002" name="Mol. Biol. Cell">
        <title>Dual regulation of actin rearrangement through lysophosphatidic acid receptor in neuroblast cell lines: actin depolymerization by Ca(2+)-alpha-actinin and polymerization by rho.</title>
        <authorList>
            <person name="Fukushima N."/>
            <person name="Ishii I."/>
            <person name="Habara Y."/>
            <person name="Allen C.B."/>
            <person name="Chun J."/>
        </authorList>
    </citation>
    <scope>FUNCTION</scope>
</reference>
<reference key="11">
    <citation type="journal article" date="2002" name="Mol. Cell. Biol.">
        <title>Characterization of lpa(2) (Edg4) and lpa(1)/lpa(2) (Edg2/Edg4) lysophosphatidic acid receptor knockout mice: signaling deficits without obvious phenotypic abnormality attributable to lpa(2).</title>
        <authorList>
            <person name="Contos J.J."/>
            <person name="Ishii I."/>
            <person name="Fukushima N."/>
            <person name="Kingsbury M.A."/>
            <person name="Ye X."/>
            <person name="Kawamura S."/>
            <person name="Brown J.H."/>
            <person name="Chun J."/>
        </authorList>
    </citation>
    <scope>DISRUPTION PHENOTYPE</scope>
    <scope>FUNCTION</scope>
    <scope>TISSUE SPECIFICITY</scope>
</reference>
<reference key="12">
    <citation type="journal article" date="2004" name="Nat. Med.">
        <title>Initiation of neuropathic pain requires lysophosphatidic acid receptor signaling.</title>
        <authorList>
            <person name="Inoue M."/>
            <person name="Rashid M.H."/>
            <person name="Fujita R."/>
            <person name="Contos J.J."/>
            <person name="Chun J."/>
            <person name="Ueda H."/>
        </authorList>
    </citation>
    <scope>DISRUPTION PHENOTYPE</scope>
    <scope>FUNCTION</scope>
    <scope>TISSUE SPECIFICITY</scope>
</reference>
<reference key="13">
    <citation type="journal article" date="2008" name="Biochim. Biophys. Acta">
        <title>A lysophosphatidic acid receptor lacking the PDZ-binding domain is constitutively active and stimulates cell proliferation.</title>
        <authorList>
            <person name="Shano S."/>
            <person name="Hatanaka K."/>
            <person name="Ninose S."/>
            <person name="Moriyama R."/>
            <person name="Tsujiuchi T."/>
            <person name="Fukushima N."/>
        </authorList>
    </citation>
    <scope>FUNCTION</scope>
    <scope>SUBCELLULAR LOCATION</scope>
</reference>
<reference key="14">
    <citation type="journal article" date="2008" name="Cereb. Cortex">
        <title>Absence of LPA1 signaling results in defective cortical development.</title>
        <authorList>
            <person name="Estivill-Torrus G."/>
            <person name="Llebrez-Zayas P."/>
            <person name="Matas-Rico E."/>
            <person name="Santin L."/>
            <person name="Pedraza C."/>
            <person name="De Diego I."/>
            <person name="Del Arco I."/>
            <person name="Fernandez-Llebrez P."/>
            <person name="Chun J."/>
            <person name="De Fonseca F.R."/>
        </authorList>
    </citation>
    <scope>DISRUPTION PHENOTYPE</scope>
    <scope>FUNCTION</scope>
</reference>
<reference key="15">
    <citation type="journal article" date="2008" name="Neurochem. Int.">
        <title>Lysophosphatidic acid stimulates astrocyte proliferation through LPA1.</title>
        <authorList>
            <person name="Shano S."/>
            <person name="Moriyama R."/>
            <person name="Chun J."/>
            <person name="Fukushima N."/>
        </authorList>
    </citation>
    <scope>FUNCTION</scope>
    <scope>TISSUE SPECIFICITY</scope>
</reference>
<reference key="16">
    <citation type="journal article" date="2008" name="Mol. Cell. Neurosci.">
        <title>Deletion of lysophosphatidic acid receptor LPA1 reduces neurogenesis in the mouse dentate gyrus.</title>
        <authorList>
            <person name="Matas-Rico E."/>
            <person name="Garcia-Diaz B."/>
            <person name="Llebrez-Zayas P."/>
            <person name="Lopez-Barroso D."/>
            <person name="Santin L."/>
            <person name="Pedraza C."/>
            <person name="Smith-Fernandez A."/>
            <person name="Fernandez-Llebrez P."/>
            <person name="Tellez T."/>
            <person name="Redondo M."/>
            <person name="Chun J."/>
            <person name="De Fonseca F.R."/>
            <person name="Estivill-Torrus G."/>
        </authorList>
    </citation>
    <scope>DISRUPTION PHENOTYPE</scope>
    <scope>FUNCTION</scope>
</reference>
<reference key="17">
    <citation type="journal article" date="2008" name="Nat. Med.">
        <title>The lysophosphatidic acid receptor LPA1 links pulmonary fibrosis to lung injury by mediating fibroblast recruitment and vascular leak.</title>
        <authorList>
            <person name="Tager A.M."/>
            <person name="LaCamera P."/>
            <person name="Shea B.S."/>
            <person name="Campanella G.S."/>
            <person name="Selman M."/>
            <person name="Zhao Z."/>
            <person name="Polosukhin V."/>
            <person name="Wain J."/>
            <person name="Karimi-Shah B.A."/>
            <person name="Kim N.D."/>
            <person name="Hart W.K."/>
            <person name="Pardo A."/>
            <person name="Blackwell T.S."/>
            <person name="Xu Y."/>
            <person name="Chun J."/>
            <person name="Luster A.D."/>
        </authorList>
    </citation>
    <scope>FUNCTION</scope>
    <scope>DISRUPTION PHENOTYPE</scope>
    <scope>TISSUE SPECIFICITY</scope>
</reference>
<reference key="18">
    <citation type="journal article" date="2009" name="Genes Brain Behav.">
        <title>Behavioral phenotype of maLPA1-null mice: increased anxiety-like behavior and spatial memory deficits.</title>
        <authorList>
            <person name="Santin L.J."/>
            <person name="Bilbao A."/>
            <person name="Pedraza C."/>
            <person name="Matas-Rico E."/>
            <person name="Lopez-Barroso D."/>
            <person name="Castilla-Ortega E."/>
            <person name="Sanchez-Lopez J."/>
            <person name="Riquelme R."/>
            <person name="Varela-Nieto I."/>
            <person name="de la Villa P."/>
            <person name="Suardiaz M."/>
            <person name="Chun J."/>
            <person name="De Fonseca F.R."/>
            <person name="Estivill-Torrus G."/>
        </authorList>
    </citation>
    <scope>DISRUPTION PHENOTYPE</scope>
    <scope>FUNCTION</scope>
</reference>
<reference key="19">
    <citation type="journal article" date="2009" name="J. Physiol. Biochem.">
        <title>Altered food consumption in mice lacking lysophosphatidic acid receptor-1.</title>
        <authorList>
            <person name="Dusaulcy R."/>
            <person name="Daviaud D."/>
            <person name="Pradere J.P."/>
            <person name="Gres S."/>
            <person name="Valet P."/>
            <person name="Saulnier-Blache J.S."/>
        </authorList>
    </citation>
    <scope>DISRUPTION PHENOTYPE</scope>
</reference>
<reference key="20">
    <citation type="journal article" date="2010" name="Cell">
        <title>A tissue-specific atlas of mouse protein phosphorylation and expression.</title>
        <authorList>
            <person name="Huttlin E.L."/>
            <person name="Jedrychowski M.P."/>
            <person name="Elias J.E."/>
            <person name="Goswami T."/>
            <person name="Rad R."/>
            <person name="Beausoleil S.A."/>
            <person name="Villen J."/>
            <person name="Haas W."/>
            <person name="Sowa M.E."/>
            <person name="Gygi S.P."/>
        </authorList>
    </citation>
    <scope>PHOSPHORYLATION [LARGE SCALE ANALYSIS] AT THR-351</scope>
    <scope>IDENTIFICATION BY MASS SPECTROMETRY [LARGE SCALE ANALYSIS]</scope>
    <source>
        <tissue>Brain</tissue>
    </source>
</reference>
<reference key="21">
    <citation type="journal article" date="2011" name="Am. J. Physiol.">
        <title>Lysophosphatidic acid receptor 1 modulates lipopolysaccharide-induced inflammation in alveolar epithelial cells and murine lungs.</title>
        <authorList>
            <person name="Zhao J."/>
            <person name="He D."/>
            <person name="Su Y."/>
            <person name="Berdyshev E."/>
            <person name="Chun J."/>
            <person name="Natarajan V."/>
            <person name="Zhao Y."/>
        </authorList>
    </citation>
    <scope>DISRUPTION PHENOTYPE</scope>
    <scope>FUNCTION</scope>
    <scope>INTERACTION WITH CD14</scope>
    <scope>SUBCELLULAR LOCATION</scope>
    <scope>INDUCTION BY BACTERIAL LIPOPOLYSACCHARIDE</scope>
    <scope>TISSUE SPECIFICITY</scope>
</reference>
<reference key="22">
    <citation type="journal article" date="2011" name="Bone">
        <title>Absence of the lysophosphatidic acid receptor LPA1 results in abnormal bone development and decreased bone mass.</title>
        <authorList>
            <person name="Gennero I."/>
            <person name="Laurencin-Dalicieux S."/>
            <person name="Conte-Auriol F."/>
            <person name="Briand-Mesange F."/>
            <person name="Laurencin D."/>
            <person name="Rue J."/>
            <person name="Beton N."/>
            <person name="Malet N."/>
            <person name="Mus M."/>
            <person name="Tokumura A."/>
            <person name="Bourin P."/>
            <person name="Vico L."/>
            <person name="Brunel G."/>
            <person name="Oreffo R.O."/>
            <person name="Chun J."/>
            <person name="Salles J.P."/>
        </authorList>
    </citation>
    <scope>DISRUPTION PHENOTYPE</scope>
    <scope>FUNCTION</scope>
    <scope>TISSUE SPECIFICITY</scope>
</reference>
<reference key="23">
    <citation type="journal article" date="2013" name="Mol. Cell. Biol.">
        <title>Distinct phospholipase C-beta isozymes mediate lysophosphatidic acid receptor 1 effects on intestinal epithelial homeostasis and wound closure.</title>
        <authorList>
            <person name="Lee S.J."/>
            <person name="Leoni G."/>
            <person name="Neumann P.A."/>
            <person name="Chun J."/>
            <person name="Nusrat A."/>
            <person name="Yun C.C."/>
        </authorList>
    </citation>
    <scope>DISRUPTION PHENOTYPE</scope>
    <scope>FUNCTION</scope>
    <scope>INTERACTION WITH GNAQ AND GNA13</scope>
</reference>
<reference key="24">
    <citation type="journal article" date="2015" name="Brain Struct. Funct.">
        <title>Loss of lysophosphatidic acid receptor LPA1 alters oligodendrocyte differentiation and myelination in the mouse cerebral cortex.</title>
        <authorList>
            <person name="Garcia-Diaz B."/>
            <person name="Riquelme R."/>
            <person name="Varela-Nieto I."/>
            <person name="Jimenez A.J."/>
            <person name="de Diego I."/>
            <person name="Gomez-Conde A.L."/>
            <person name="Matas-Rico E."/>
            <person name="Aguirre J.A."/>
            <person name="Chun J."/>
            <person name="Pedraza C."/>
            <person name="Santin L.J."/>
            <person name="Fernandez O."/>
            <person name="Rodriguez de Fonseca F."/>
            <person name="Estivill-Torrus G."/>
        </authorList>
    </citation>
    <scope>DISRUPTION PHENOTYPE</scope>
    <scope>TISSUE SPECIFICITY</scope>
</reference>
<reference key="25">
    <citation type="journal article" date="2015" name="Cell. Mol. Life Sci.">
        <title>Comparative analyses of lysophosphatidic acid receptor-mediated signaling.</title>
        <authorList>
            <person name="Fukushima N."/>
            <person name="Ishii S."/>
            <person name="Tsujiuchi T."/>
            <person name="Kagawa N."/>
            <person name="Katoh K."/>
        </authorList>
    </citation>
    <scope>REVIEW</scope>
</reference>
<gene>
    <name type="primary">Lpar1</name>
    <name type="synonym">Edg2</name>
    <name evidence="26" type="synonym">Gpcr26</name>
    <name evidence="25 26" type="synonym">Lpa1</name>
    <name evidence="23 25" type="synonym">Vzg1</name>
</gene>
<name>LPAR1_MOUSE</name>
<keyword id="KW-0025">Alternative splicing</keyword>
<keyword id="KW-1003">Cell membrane</keyword>
<keyword id="KW-1015">Disulfide bond</keyword>
<keyword id="KW-0967">Endosome</keyword>
<keyword id="KW-0297">G-protein coupled receptor</keyword>
<keyword id="KW-0325">Glycoprotein</keyword>
<keyword id="KW-0472">Membrane</keyword>
<keyword id="KW-0597">Phosphoprotein</keyword>
<keyword id="KW-0675">Receptor</keyword>
<keyword id="KW-1185">Reference proteome</keyword>
<keyword id="KW-0807">Transducer</keyword>
<keyword id="KW-0812">Transmembrane</keyword>
<keyword id="KW-1133">Transmembrane helix</keyword>
<organism>
    <name type="scientific">Mus musculus</name>
    <name type="common">Mouse</name>
    <dbReference type="NCBI Taxonomy" id="10090"/>
    <lineage>
        <taxon>Eukaryota</taxon>
        <taxon>Metazoa</taxon>
        <taxon>Chordata</taxon>
        <taxon>Craniata</taxon>
        <taxon>Vertebrata</taxon>
        <taxon>Euteleostomi</taxon>
        <taxon>Mammalia</taxon>
        <taxon>Eutheria</taxon>
        <taxon>Euarchontoglires</taxon>
        <taxon>Glires</taxon>
        <taxon>Rodentia</taxon>
        <taxon>Myomorpha</taxon>
        <taxon>Muroidea</taxon>
        <taxon>Muridae</taxon>
        <taxon>Murinae</taxon>
        <taxon>Mus</taxon>
        <taxon>Mus</taxon>
    </lineage>
</organism>
<dbReference type="EMBL" id="U70622">
    <property type="protein sequence ID" value="AAC52923.1"/>
    <property type="molecule type" value="mRNA"/>
</dbReference>
<dbReference type="EMBL" id="U48235">
    <property type="protein sequence ID" value="AAC53035.1"/>
    <property type="molecule type" value="mRNA"/>
</dbReference>
<dbReference type="EMBL" id="AF075456">
    <property type="protein sequence ID" value="AAC34301.1"/>
    <property type="molecule type" value="Genomic_DNA"/>
</dbReference>
<dbReference type="EMBL" id="AF075453">
    <property type="protein sequence ID" value="AAC34301.1"/>
    <property type="status" value="JOINED"/>
    <property type="molecule type" value="Genomic_DNA"/>
</dbReference>
<dbReference type="EMBL" id="AF075455">
    <property type="protein sequence ID" value="AAC34301.1"/>
    <property type="status" value="JOINED"/>
    <property type="molecule type" value="Genomic_DNA"/>
</dbReference>
<dbReference type="EMBL" id="AF075456">
    <property type="protein sequence ID" value="AAC34302.1"/>
    <property type="molecule type" value="Genomic_DNA"/>
</dbReference>
<dbReference type="EMBL" id="AF075455">
    <property type="protein sequence ID" value="AAC34302.1"/>
    <property type="status" value="JOINED"/>
    <property type="molecule type" value="Genomic_DNA"/>
</dbReference>
<dbReference type="EMBL" id="AL807748">
    <property type="status" value="NOT_ANNOTATED_CDS"/>
    <property type="molecule type" value="Genomic_DNA"/>
</dbReference>
<dbReference type="EMBL" id="BC025425">
    <property type="protein sequence ID" value="AAH25425.1"/>
    <property type="molecule type" value="mRNA"/>
</dbReference>
<dbReference type="CCDS" id="CCDS18212.1"/>
<dbReference type="CCDS" id="CCDS71391.1">
    <molecule id="P61793-2"/>
</dbReference>
<dbReference type="RefSeq" id="NP_001277415.1">
    <molecule id="P61793-2"/>
    <property type="nucleotide sequence ID" value="NM_001290486.2"/>
</dbReference>
<dbReference type="RefSeq" id="NP_001407938.1">
    <molecule id="P61793-1"/>
    <property type="nucleotide sequence ID" value="NM_001421009.1"/>
</dbReference>
<dbReference type="RefSeq" id="NP_001407939.1">
    <molecule id="P61793-1"/>
    <property type="nucleotide sequence ID" value="NM_001421010.1"/>
</dbReference>
<dbReference type="RefSeq" id="NP_001407940.1">
    <molecule id="P61793-1"/>
    <property type="nucleotide sequence ID" value="NM_001421011.1"/>
</dbReference>
<dbReference type="RefSeq" id="NP_001407941.1">
    <molecule id="P61793-1"/>
    <property type="nucleotide sequence ID" value="NM_001421012.1"/>
</dbReference>
<dbReference type="RefSeq" id="NP_001407942.1">
    <molecule id="P61793-1"/>
    <property type="nucleotide sequence ID" value="NM_001421013.1"/>
</dbReference>
<dbReference type="RefSeq" id="NP_001407943.1">
    <molecule id="P61793-1"/>
    <property type="nucleotide sequence ID" value="NM_001421014.1"/>
</dbReference>
<dbReference type="RefSeq" id="NP_001407944.1">
    <molecule id="P61793-1"/>
    <property type="nucleotide sequence ID" value="NM_001421015.1"/>
</dbReference>
<dbReference type="RefSeq" id="NP_001407945.1">
    <molecule id="P61793-1"/>
    <property type="nucleotide sequence ID" value="NM_001421016.1"/>
</dbReference>
<dbReference type="RefSeq" id="NP_034466.2">
    <molecule id="P61793-1"/>
    <property type="nucleotide sequence ID" value="NM_010336.2"/>
</dbReference>
<dbReference type="RefSeq" id="NP_766577.1">
    <molecule id="P61793-1"/>
    <property type="nucleotide sequence ID" value="NM_172989.2"/>
</dbReference>
<dbReference type="RefSeq" id="XP_011248230.1">
    <property type="nucleotide sequence ID" value="XM_011249928.2"/>
</dbReference>
<dbReference type="RefSeq" id="XP_011248231.1">
    <property type="nucleotide sequence ID" value="XM_011249929.2"/>
</dbReference>
<dbReference type="RefSeq" id="XP_011248232.1">
    <molecule id="P61793-1"/>
    <property type="nucleotide sequence ID" value="XM_011249930.3"/>
</dbReference>
<dbReference type="RefSeq" id="XP_011248233.1">
    <property type="nucleotide sequence ID" value="XM_011249931.2"/>
</dbReference>
<dbReference type="RefSeq" id="XP_011248234.1">
    <molecule id="P61793-1"/>
    <property type="nucleotide sequence ID" value="XM_011249932.4"/>
</dbReference>
<dbReference type="RefSeq" id="XP_011248235.1">
    <molecule id="P61793-1"/>
    <property type="nucleotide sequence ID" value="XM_011249933.4"/>
</dbReference>
<dbReference type="RefSeq" id="XP_011248236.1">
    <property type="nucleotide sequence ID" value="XM_011249934.2"/>
</dbReference>
<dbReference type="RefSeq" id="XP_011248237.1">
    <property type="nucleotide sequence ID" value="XM_011249935.2"/>
</dbReference>
<dbReference type="RefSeq" id="XP_030109075.1">
    <molecule id="P61793-1"/>
    <property type="nucleotide sequence ID" value="XM_030253215.2"/>
</dbReference>
<dbReference type="RefSeq" id="XP_036019578.1">
    <molecule id="P61793-1"/>
    <property type="nucleotide sequence ID" value="XM_036163685.1"/>
</dbReference>
<dbReference type="RefSeq" id="XP_036019579.1">
    <molecule id="P61793-1"/>
    <property type="nucleotide sequence ID" value="XM_036163686.1"/>
</dbReference>
<dbReference type="SMR" id="P61793"/>
<dbReference type="BioGRID" id="200018">
    <property type="interactions" value="3"/>
</dbReference>
<dbReference type="CORUM" id="P61793"/>
<dbReference type="DIP" id="DIP-42214N"/>
<dbReference type="FunCoup" id="P61793">
    <property type="interactions" value="1370"/>
</dbReference>
<dbReference type="IntAct" id="P61793">
    <property type="interactions" value="4"/>
</dbReference>
<dbReference type="MINT" id="P61793"/>
<dbReference type="STRING" id="10090.ENSMUSP00000103197"/>
<dbReference type="ChEMBL" id="CHEMBL3621025"/>
<dbReference type="GuidetoPHARMACOLOGY" id="272"/>
<dbReference type="GlyCosmos" id="P61793">
    <property type="glycosylation" value="2 sites, No reported glycans"/>
</dbReference>
<dbReference type="GlyGen" id="P61793">
    <property type="glycosylation" value="4 sites, 1 N-linked glycan (1 site)"/>
</dbReference>
<dbReference type="iPTMnet" id="P61793"/>
<dbReference type="PhosphoSitePlus" id="P61793"/>
<dbReference type="SwissPalm" id="P61793"/>
<dbReference type="jPOST" id="P61793"/>
<dbReference type="PaxDb" id="10090-ENSMUSP00000052581"/>
<dbReference type="PeptideAtlas" id="P61793"/>
<dbReference type="ProteomicsDB" id="290140"/>
<dbReference type="ProteomicsDB" id="290141">
    <molecule id="P61793-2"/>
</dbReference>
<dbReference type="Pumba" id="P61793"/>
<dbReference type="Antibodypedia" id="15104">
    <property type="antibodies" value="404 antibodies from 36 providers"/>
</dbReference>
<dbReference type="DNASU" id="14745"/>
<dbReference type="Ensembl" id="ENSMUST00000055018.11">
    <molecule id="P61793-1"/>
    <property type="protein sequence ID" value="ENSMUSP00000052581.5"/>
    <property type="gene ID" value="ENSMUSG00000038668.15"/>
</dbReference>
<dbReference type="Ensembl" id="ENSMUST00000107570.2">
    <molecule id="P61793-2"/>
    <property type="protein sequence ID" value="ENSMUSP00000103196.2"/>
    <property type="gene ID" value="ENSMUSG00000038668.15"/>
</dbReference>
<dbReference type="Ensembl" id="ENSMUST00000107571.8">
    <molecule id="P61793-1"/>
    <property type="protein sequence ID" value="ENSMUSP00000103197.2"/>
    <property type="gene ID" value="ENSMUSG00000038668.15"/>
</dbReference>
<dbReference type="Ensembl" id="ENSMUST00000107574.8">
    <molecule id="P61793-1"/>
    <property type="protein sequence ID" value="ENSMUSP00000103200.2"/>
    <property type="gene ID" value="ENSMUSG00000038668.15"/>
</dbReference>
<dbReference type="Ensembl" id="ENSMUST00000107575.9">
    <molecule id="P61793-1"/>
    <property type="protein sequence ID" value="ENSMUSP00000103201.3"/>
    <property type="gene ID" value="ENSMUSG00000038668.15"/>
</dbReference>
<dbReference type="GeneID" id="14745"/>
<dbReference type="KEGG" id="mmu:14745"/>
<dbReference type="UCSC" id="uc008szb.3">
    <property type="organism name" value="mouse"/>
</dbReference>
<dbReference type="AGR" id="MGI:108429"/>
<dbReference type="CTD" id="1902"/>
<dbReference type="MGI" id="MGI:108429">
    <property type="gene designation" value="Lpar1"/>
</dbReference>
<dbReference type="VEuPathDB" id="HostDB:ENSMUSG00000038668"/>
<dbReference type="eggNOG" id="KOG3656">
    <property type="taxonomic scope" value="Eukaryota"/>
</dbReference>
<dbReference type="GeneTree" id="ENSGT01120000271896"/>
<dbReference type="HOGENOM" id="CLU_047979_0_0_1"/>
<dbReference type="InParanoid" id="P61793"/>
<dbReference type="OMA" id="CQRQENI"/>
<dbReference type="OrthoDB" id="5987098at2759"/>
<dbReference type="PhylomeDB" id="P61793"/>
<dbReference type="TreeFam" id="TF330052"/>
<dbReference type="Reactome" id="R-MMU-416476">
    <property type="pathway name" value="G alpha (q) signalling events"/>
</dbReference>
<dbReference type="Reactome" id="R-MMU-418594">
    <property type="pathway name" value="G alpha (i) signalling events"/>
</dbReference>
<dbReference type="Reactome" id="R-MMU-419408">
    <property type="pathway name" value="Lysosphingolipid and LPA receptors"/>
</dbReference>
<dbReference type="BioGRID-ORCS" id="14745">
    <property type="hits" value="1 hit in 78 CRISPR screens"/>
</dbReference>
<dbReference type="ChiTaRS" id="Lpar1">
    <property type="organism name" value="mouse"/>
</dbReference>
<dbReference type="PRO" id="PR:P61793"/>
<dbReference type="Proteomes" id="UP000000589">
    <property type="component" value="Chromosome 4"/>
</dbReference>
<dbReference type="RNAct" id="P61793">
    <property type="molecule type" value="protein"/>
</dbReference>
<dbReference type="Bgee" id="ENSMUSG00000038668">
    <property type="expression patterns" value="Expressed in 1st arch maxillary component and 280 other cell types or tissues"/>
</dbReference>
<dbReference type="ExpressionAtlas" id="P61793">
    <property type="expression patterns" value="baseline and differential"/>
</dbReference>
<dbReference type="GO" id="GO:0009986">
    <property type="term" value="C:cell surface"/>
    <property type="evidence" value="ECO:0000250"/>
    <property type="project" value="UniProtKB"/>
</dbReference>
<dbReference type="GO" id="GO:0043198">
    <property type="term" value="C:dendritic shaft"/>
    <property type="evidence" value="ECO:0007669"/>
    <property type="project" value="Ensembl"/>
</dbReference>
<dbReference type="GO" id="GO:0043197">
    <property type="term" value="C:dendritic spine"/>
    <property type="evidence" value="ECO:0007669"/>
    <property type="project" value="Ensembl"/>
</dbReference>
<dbReference type="GO" id="GO:0030139">
    <property type="term" value="C:endocytic vesicle"/>
    <property type="evidence" value="ECO:0007669"/>
    <property type="project" value="Ensembl"/>
</dbReference>
<dbReference type="GO" id="GO:0005768">
    <property type="term" value="C:endosome"/>
    <property type="evidence" value="ECO:0007669"/>
    <property type="project" value="UniProtKB-SubCell"/>
</dbReference>
<dbReference type="GO" id="GO:0098982">
    <property type="term" value="C:GABA-ergic synapse"/>
    <property type="evidence" value="ECO:0007669"/>
    <property type="project" value="Ensembl"/>
</dbReference>
<dbReference type="GO" id="GO:0098978">
    <property type="term" value="C:glutamatergic synapse"/>
    <property type="evidence" value="ECO:0007669"/>
    <property type="project" value="Ensembl"/>
</dbReference>
<dbReference type="GO" id="GO:0043025">
    <property type="term" value="C:neuronal cell body"/>
    <property type="evidence" value="ECO:0007669"/>
    <property type="project" value="Ensembl"/>
</dbReference>
<dbReference type="GO" id="GO:0005886">
    <property type="term" value="C:plasma membrane"/>
    <property type="evidence" value="ECO:0000314"/>
    <property type="project" value="UniProtKB"/>
</dbReference>
<dbReference type="GO" id="GO:0045211">
    <property type="term" value="C:postsynaptic membrane"/>
    <property type="evidence" value="ECO:0007669"/>
    <property type="project" value="Ensembl"/>
</dbReference>
<dbReference type="GO" id="GO:0042734">
    <property type="term" value="C:presynaptic membrane"/>
    <property type="evidence" value="ECO:0007669"/>
    <property type="project" value="Ensembl"/>
</dbReference>
<dbReference type="GO" id="GO:0001965">
    <property type="term" value="F:G-protein alpha-subunit binding"/>
    <property type="evidence" value="ECO:0007669"/>
    <property type="project" value="Ensembl"/>
</dbReference>
<dbReference type="GO" id="GO:0035727">
    <property type="term" value="F:lysophosphatidic acid binding"/>
    <property type="evidence" value="ECO:0007669"/>
    <property type="project" value="Ensembl"/>
</dbReference>
<dbReference type="GO" id="GO:0070915">
    <property type="term" value="F:lysophosphatidic acid receptor activity"/>
    <property type="evidence" value="ECO:0000314"/>
    <property type="project" value="UniProtKB"/>
</dbReference>
<dbReference type="GO" id="GO:0030165">
    <property type="term" value="F:PDZ domain binding"/>
    <property type="evidence" value="ECO:0000353"/>
    <property type="project" value="MGI"/>
</dbReference>
<dbReference type="GO" id="GO:0007193">
    <property type="term" value="P:adenylate cyclase-inhibiting G protein-coupled receptor signaling pathway"/>
    <property type="evidence" value="ECO:0000314"/>
    <property type="project" value="UniProtKB"/>
</dbReference>
<dbReference type="GO" id="GO:0032060">
    <property type="term" value="P:bleb assembly"/>
    <property type="evidence" value="ECO:0000316"/>
    <property type="project" value="MGI"/>
</dbReference>
<dbReference type="GO" id="GO:0060326">
    <property type="term" value="P:cell chemotaxis"/>
    <property type="evidence" value="ECO:0007669"/>
    <property type="project" value="Ensembl"/>
</dbReference>
<dbReference type="GO" id="GO:1904566">
    <property type="term" value="P:cellular response to 1-oleoyl-sn-glycerol 3-phosphate"/>
    <property type="evidence" value="ECO:0007669"/>
    <property type="project" value="Ensembl"/>
</dbReference>
<dbReference type="GO" id="GO:0071453">
    <property type="term" value="P:cellular response to oxygen levels"/>
    <property type="evidence" value="ECO:0007669"/>
    <property type="project" value="Ensembl"/>
</dbReference>
<dbReference type="GO" id="GO:0021549">
    <property type="term" value="P:cerebellum development"/>
    <property type="evidence" value="ECO:0007669"/>
    <property type="project" value="Ensembl"/>
</dbReference>
<dbReference type="GO" id="GO:0022038">
    <property type="term" value="P:corpus callosum development"/>
    <property type="evidence" value="ECO:0007669"/>
    <property type="project" value="Ensembl"/>
</dbReference>
<dbReference type="GO" id="GO:0007186">
    <property type="term" value="P:G protein-coupled receptor signaling pathway"/>
    <property type="evidence" value="ECO:0000314"/>
    <property type="project" value="UniProtKB"/>
</dbReference>
<dbReference type="GO" id="GO:0042552">
    <property type="term" value="P:myelination"/>
    <property type="evidence" value="ECO:0007669"/>
    <property type="project" value="Ensembl"/>
</dbReference>
<dbReference type="GO" id="GO:0141162">
    <property type="term" value="P:negative regulation of cAMP/PKA signal transduction"/>
    <property type="evidence" value="ECO:0007669"/>
    <property type="project" value="Ensembl"/>
</dbReference>
<dbReference type="GO" id="GO:1902018">
    <property type="term" value="P:negative regulation of cilium assembly"/>
    <property type="evidence" value="ECO:0000250"/>
    <property type="project" value="UniProtKB"/>
</dbReference>
<dbReference type="GO" id="GO:0010977">
    <property type="term" value="P:negative regulation of neuron projection development"/>
    <property type="evidence" value="ECO:0000314"/>
    <property type="project" value="UniProtKB"/>
</dbReference>
<dbReference type="GO" id="GO:0014003">
    <property type="term" value="P:oligodendrocyte development"/>
    <property type="evidence" value="ECO:0007669"/>
    <property type="project" value="Ensembl"/>
</dbReference>
<dbReference type="GO" id="GO:0021554">
    <property type="term" value="P:optic nerve development"/>
    <property type="evidence" value="ECO:0007669"/>
    <property type="project" value="Ensembl"/>
</dbReference>
<dbReference type="GO" id="GO:0007200">
    <property type="term" value="P:phospholipase C-activating G protein-coupled receptor signaling pathway"/>
    <property type="evidence" value="ECO:0007669"/>
    <property type="project" value="Ensembl"/>
</dbReference>
<dbReference type="GO" id="GO:0043065">
    <property type="term" value="P:positive regulation of apoptotic process"/>
    <property type="evidence" value="ECO:0007669"/>
    <property type="project" value="Ensembl"/>
</dbReference>
<dbReference type="GO" id="GO:0043123">
    <property type="term" value="P:positive regulation of canonical NF-kappaB signal transduction"/>
    <property type="evidence" value="ECO:0007669"/>
    <property type="project" value="Ensembl"/>
</dbReference>
<dbReference type="GO" id="GO:0060999">
    <property type="term" value="P:positive regulation of dendritic spine development"/>
    <property type="evidence" value="ECO:0007669"/>
    <property type="project" value="Ensembl"/>
</dbReference>
<dbReference type="GO" id="GO:0043410">
    <property type="term" value="P:positive regulation of MAPK cascade"/>
    <property type="evidence" value="ECO:0000314"/>
    <property type="project" value="UniProtKB"/>
</dbReference>
<dbReference type="GO" id="GO:0035025">
    <property type="term" value="P:positive regulation of Rho protein signal transduction"/>
    <property type="evidence" value="ECO:0000314"/>
    <property type="project" value="UniProtKB"/>
</dbReference>
<dbReference type="GO" id="GO:0071673">
    <property type="term" value="P:positive regulation of smooth muscle cell chemotaxis"/>
    <property type="evidence" value="ECO:0007669"/>
    <property type="project" value="Ensembl"/>
</dbReference>
<dbReference type="GO" id="GO:0051496">
    <property type="term" value="P:positive regulation of stress fiber assembly"/>
    <property type="evidence" value="ECO:0000314"/>
    <property type="project" value="UniProtKB"/>
</dbReference>
<dbReference type="GO" id="GO:0008360">
    <property type="term" value="P:regulation of cell shape"/>
    <property type="evidence" value="ECO:0000314"/>
    <property type="project" value="UniProtKB"/>
</dbReference>
<dbReference type="GO" id="GO:0099149">
    <property type="term" value="P:regulation of postsynaptic neurotransmitter receptor internalization"/>
    <property type="evidence" value="ECO:0007669"/>
    <property type="project" value="Ensembl"/>
</dbReference>
<dbReference type="GO" id="GO:0098693">
    <property type="term" value="P:regulation of synaptic vesicle cycle"/>
    <property type="evidence" value="ECO:0007669"/>
    <property type="project" value="Ensembl"/>
</dbReference>
<dbReference type="CDD" id="cd15344">
    <property type="entry name" value="7tmA_LPAR1_Edg2"/>
    <property type="match status" value="1"/>
</dbReference>
<dbReference type="FunFam" id="1.20.1070.10:FF:000025">
    <property type="entry name" value="Lysophosphatidic acid receptor 1"/>
    <property type="match status" value="1"/>
</dbReference>
<dbReference type="Gene3D" id="1.20.1070.10">
    <property type="entry name" value="Rhodopsin 7-helix transmembrane proteins"/>
    <property type="match status" value="1"/>
</dbReference>
<dbReference type="InterPro" id="IPR000276">
    <property type="entry name" value="GPCR_Rhodpsn"/>
</dbReference>
<dbReference type="InterPro" id="IPR017452">
    <property type="entry name" value="GPCR_Rhodpsn_7TM"/>
</dbReference>
<dbReference type="InterPro" id="IPR004065">
    <property type="entry name" value="LPA_rcpt"/>
</dbReference>
<dbReference type="InterPro" id="IPR002277">
    <property type="entry name" value="LPA_rcpt_EDG2"/>
</dbReference>
<dbReference type="PANTHER" id="PTHR22750">
    <property type="entry name" value="G-PROTEIN COUPLED RECEPTOR"/>
    <property type="match status" value="1"/>
</dbReference>
<dbReference type="Pfam" id="PF00001">
    <property type="entry name" value="7tm_1"/>
    <property type="match status" value="1"/>
</dbReference>
<dbReference type="PRINTS" id="PR01148">
    <property type="entry name" value="EDG2RECEPTOR"/>
</dbReference>
<dbReference type="PRINTS" id="PR00237">
    <property type="entry name" value="GPCRRHODOPSN"/>
</dbReference>
<dbReference type="PRINTS" id="PR01527">
    <property type="entry name" value="LPARECEPTOR"/>
</dbReference>
<dbReference type="SMART" id="SM01381">
    <property type="entry name" value="7TM_GPCR_Srsx"/>
    <property type="match status" value="1"/>
</dbReference>
<dbReference type="SUPFAM" id="SSF81321">
    <property type="entry name" value="Family A G protein-coupled receptor-like"/>
    <property type="match status" value="1"/>
</dbReference>
<dbReference type="PROSITE" id="PS00237">
    <property type="entry name" value="G_PROTEIN_RECEP_F1_1"/>
    <property type="match status" value="1"/>
</dbReference>
<dbReference type="PROSITE" id="PS50262">
    <property type="entry name" value="G_PROTEIN_RECEP_F1_2"/>
    <property type="match status" value="1"/>
</dbReference>
<protein>
    <recommendedName>
        <fullName evidence="27">Lysophosphatidic acid receptor 1</fullName>
        <shortName evidence="27">LPA receptor 1</shortName>
        <shortName evidence="25 26">LPA-1</shortName>
    </recommendedName>
    <alternativeName>
        <fullName evidence="25">Lysophosphatidic acid receptor Edg-2</fullName>
    </alternativeName>
    <alternativeName>
        <fullName evidence="24">Rec1.3</fullName>
    </alternativeName>
    <alternativeName>
        <fullName evidence="23 25">VZG-1</fullName>
    </alternativeName>
</protein>
<sequence length="364" mass="41119">MAAASTSSPVISQPQFTAMNEQQCFYNESIAFFYNRSGKYLATEWNTVSKLVMGLGITVCVFIMLANLLVMVAIYVNRRFHFPIYYLMANLAAADFFAGLAYFYLMFNTGPNTRRLTVSTWLLRQGLIDTSLTASVANLLAIAIERHITVFRMQLHTRMSNRRVVVVIVVIWTMAIVMGAIPSVGWNCICDIDHCSNMAPLYSDSYLVFWAIFNLVTFVVMVVLYAHIFGYVRQRTMRMSRHSSGPRRNRDTMMSLLKTVVIVLGAFIVCWTPGLVLLLLDVCCPQCDVLAYEKFFLLLAEFNSAMNPIIYSYRDKEMSATFRQILCCQRNENPNGPTEGSDRSASSLNHTILAGVHSNDHSVV</sequence>
<feature type="chain" id="PRO_0000069418" description="Lysophosphatidic acid receptor 1">
    <location>
        <begin position="1"/>
        <end position="364"/>
    </location>
</feature>
<feature type="topological domain" description="Extracellular" evidence="1">
    <location>
        <begin position="1"/>
        <end position="50"/>
    </location>
</feature>
<feature type="transmembrane region" description="Helical; Name=1" evidence="1">
    <location>
        <begin position="51"/>
        <end position="75"/>
    </location>
</feature>
<feature type="topological domain" description="Cytoplasmic" evidence="1">
    <location>
        <begin position="76"/>
        <end position="83"/>
    </location>
</feature>
<feature type="transmembrane region" description="Helical; Name=2" evidence="1">
    <location>
        <begin position="84"/>
        <end position="107"/>
    </location>
</feature>
<feature type="topological domain" description="Extracellular" evidence="1">
    <location>
        <begin position="108"/>
        <end position="121"/>
    </location>
</feature>
<feature type="transmembrane region" description="Helical; Name=3" evidence="1">
    <location>
        <begin position="122"/>
        <end position="144"/>
    </location>
</feature>
<feature type="topological domain" description="Cytoplasmic" evidence="1">
    <location>
        <begin position="145"/>
        <end position="163"/>
    </location>
</feature>
<feature type="transmembrane region" description="Helical; Name=4" evidence="1">
    <location>
        <begin position="164"/>
        <end position="184"/>
    </location>
</feature>
<feature type="topological domain" description="Extracellular" evidence="1">
    <location>
        <begin position="185"/>
        <end position="204"/>
    </location>
</feature>
<feature type="transmembrane region" description="Helical; Name=5" evidence="1">
    <location>
        <begin position="205"/>
        <end position="225"/>
    </location>
</feature>
<feature type="topological domain" description="Cytoplasmic" evidence="1">
    <location>
        <begin position="226"/>
        <end position="255"/>
    </location>
</feature>
<feature type="transmembrane region" description="Helical; Name=6" evidence="1">
    <location>
        <begin position="256"/>
        <end position="280"/>
    </location>
</feature>
<feature type="topological domain" description="Extracellular" evidence="1">
    <location>
        <begin position="281"/>
        <end position="294"/>
    </location>
</feature>
<feature type="transmembrane region" description="Helical; Name=7" evidence="1">
    <location>
        <begin position="295"/>
        <end position="315"/>
    </location>
</feature>
<feature type="topological domain" description="Cytoplasmic" evidence="1">
    <location>
        <begin position="316"/>
        <end position="364"/>
    </location>
</feature>
<feature type="binding site" evidence="1">
    <location>
        <position position="39"/>
    </location>
    <ligand>
        <name>a 1-acyl-sn-glycero-3-phosphate</name>
        <dbReference type="ChEBI" id="CHEBI:57970"/>
    </ligand>
</feature>
<feature type="binding site" evidence="1">
    <location>
        <begin position="124"/>
        <end position="129"/>
    </location>
    <ligand>
        <name>a 1-acyl-sn-glycero-3-phosphate</name>
        <dbReference type="ChEBI" id="CHEBI:57970"/>
    </ligand>
</feature>
<feature type="binding site" evidence="1">
    <location>
        <position position="210"/>
    </location>
    <ligand>
        <name>a 1-acyl-sn-glycero-3-phosphate</name>
        <dbReference type="ChEBI" id="CHEBI:57970"/>
    </ligand>
</feature>
<feature type="modified residue" description="Phosphoserine" evidence="1">
    <location>
        <position position="341"/>
    </location>
</feature>
<feature type="modified residue" description="Phosphothreonine" evidence="30">
    <location>
        <position position="351"/>
    </location>
</feature>
<feature type="glycosylation site" description="N-linked (GlcNAc...) asparagine" evidence="2">
    <location>
        <position position="27"/>
    </location>
</feature>
<feature type="glycosylation site" description="N-linked (GlcNAc...) asparagine" evidence="2">
    <location>
        <position position="35"/>
    </location>
</feature>
<feature type="disulfide bond" evidence="1">
    <location>
        <begin position="24"/>
        <end position="190"/>
    </location>
</feature>
<feature type="disulfide bond" evidence="1">
    <location>
        <begin position="188"/>
        <end position="195"/>
    </location>
</feature>
<feature type="disulfide bond" evidence="1">
    <location>
        <begin position="284"/>
        <end position="287"/>
    </location>
</feature>
<feature type="splice variant" id="VSP_001986" description="In isoform 2." evidence="24">
    <location>
        <begin position="1"/>
        <end position="18"/>
    </location>
</feature>
<feature type="sequence conflict" description="In Ref. 3; AAC34301/AAC34302." evidence="27" ref="3">
    <original>S</original>
    <variation>N</variation>
    <location>
        <position position="119"/>
    </location>
</feature>
<feature type="sequence conflict" description="In Ref. 3; AAC34301/AAC34302." evidence="27" ref="3">
    <original>IPS</original>
    <variation>MPT</variation>
    <location>
        <begin position="181"/>
        <end position="183"/>
    </location>
</feature>
<feature type="sequence conflict" description="In Ref. 2; AAC53035." evidence="27" ref="2">
    <original>Y</original>
    <variation>S</variation>
    <location>
        <position position="225"/>
    </location>
</feature>
<proteinExistence type="evidence at protein level"/>